<protein>
    <recommendedName>
        <fullName>C-type natriuretic peptide</fullName>
    </recommendedName>
    <component>
        <recommendedName>
            <fullName>CNP-22</fullName>
        </recommendedName>
    </component>
    <component>
        <recommendedName>
            <fullName>CNP-29</fullName>
        </recommendedName>
    </component>
    <component>
        <recommendedName>
            <fullName>CNP-53</fullName>
        </recommendedName>
    </component>
</protein>
<gene>
    <name type="primary">Nppc</name>
    <name type="synonym">Cnp</name>
</gene>
<comment type="function">
    <molecule>CNP-22</molecule>
    <text evidence="2 5 6">Hormone which plays a role in endochondral ossification through regulation of cartilaginous growth plate chondrocytes proliferation and differentiation (PubMed:11259675). May also be vasoactive and natriuretic (By similarity). Acts by specifically binding and stimulating NPR2 to produce cGMP (PubMed:12890708). Binds the clearance receptor NPR3 (By similarity).</text>
</comment>
<comment type="subcellular location">
    <subcellularLocation>
        <location>Secreted</location>
    </subcellularLocation>
</comment>
<comment type="PTM">
    <molecule>CNP-22</molecule>
    <text evidence="2">Degraded by IDE (in vitro).</text>
</comment>
<comment type="disruption phenotype">
    <text evidence="5">Mice are viable perinatally but less than half survive postnatally due to skeletal abnormalities. They display severe dwarfism which is the consequence of a defect in endochondral ossification.</text>
</comment>
<comment type="similarity">
    <text evidence="7">Belongs to the natriuretic peptide family.</text>
</comment>
<keyword id="KW-0165">Cleavage on pair of basic residues</keyword>
<keyword id="KW-1015">Disulfide bond</keyword>
<keyword id="KW-0372">Hormone</keyword>
<keyword id="KW-0892">Osteogenesis</keyword>
<keyword id="KW-1185">Reference proteome</keyword>
<keyword id="KW-0964">Secreted</keyword>
<keyword id="KW-0732">Signal</keyword>
<keyword id="KW-0838">Vasoactive</keyword>
<feature type="signal peptide" evidence="3">
    <location>
        <begin position="1"/>
        <end position="23"/>
    </location>
</feature>
<feature type="propeptide" id="PRO_0000001557">
    <location>
        <begin position="24"/>
        <end position="73"/>
    </location>
</feature>
<feature type="peptide" id="PRO_0000001558" description="CNP-53" evidence="1">
    <location>
        <begin position="74"/>
        <end position="126"/>
    </location>
</feature>
<feature type="peptide" id="PRO_0000001559" description="CNP-29" evidence="1">
    <location>
        <begin position="98"/>
        <end position="126"/>
    </location>
</feature>
<feature type="peptide" id="PRO_0000001560" description="CNP-22">
    <location>
        <begin position="105"/>
        <end position="126"/>
    </location>
</feature>
<feature type="region of interest" description="Disordered" evidence="4">
    <location>
        <begin position="20"/>
        <end position="73"/>
    </location>
</feature>
<feature type="compositionally biased region" description="Pro residues" evidence="4">
    <location>
        <begin position="26"/>
        <end position="35"/>
    </location>
</feature>
<feature type="disulfide bond" evidence="1">
    <location>
        <begin position="110"/>
        <end position="126"/>
    </location>
</feature>
<dbReference type="EMBL" id="D28873">
    <property type="protein sequence ID" value="BAA06028.1"/>
    <property type="molecule type" value="Genomic_DNA"/>
</dbReference>
<dbReference type="EMBL" id="U62939">
    <property type="protein sequence ID" value="AAB61717.1"/>
    <property type="molecule type" value="Genomic_DNA"/>
</dbReference>
<dbReference type="CCDS" id="CCDS15123.1"/>
<dbReference type="PIR" id="A55688">
    <property type="entry name" value="A55688"/>
</dbReference>
<dbReference type="RefSeq" id="NP_035063.1">
    <property type="nucleotide sequence ID" value="NM_010933.5"/>
</dbReference>
<dbReference type="BioGRID" id="201829">
    <property type="interactions" value="1"/>
</dbReference>
<dbReference type="FunCoup" id="Q61839">
    <property type="interactions" value="239"/>
</dbReference>
<dbReference type="STRING" id="10090.ENSMUSP00000027449"/>
<dbReference type="PhosphoSitePlus" id="Q61839"/>
<dbReference type="SwissPalm" id="Q61839"/>
<dbReference type="PaxDb" id="10090-ENSMUSP00000027449"/>
<dbReference type="ProteomicsDB" id="296289"/>
<dbReference type="Antibodypedia" id="50954">
    <property type="antibodies" value="284 antibodies from 31 providers"/>
</dbReference>
<dbReference type="DNASU" id="18159"/>
<dbReference type="Ensembl" id="ENSMUST00000027449.6">
    <property type="protein sequence ID" value="ENSMUSP00000027449.5"/>
    <property type="gene ID" value="ENSMUSG00000026241.6"/>
</dbReference>
<dbReference type="GeneID" id="18159"/>
<dbReference type="KEGG" id="mmu:18159"/>
<dbReference type="UCSC" id="uc007bvt.2">
    <property type="organism name" value="mouse"/>
</dbReference>
<dbReference type="AGR" id="MGI:97369"/>
<dbReference type="CTD" id="4880"/>
<dbReference type="MGI" id="MGI:97369">
    <property type="gene designation" value="Nppc"/>
</dbReference>
<dbReference type="VEuPathDB" id="HostDB:ENSMUSG00000026241"/>
<dbReference type="eggNOG" id="ENOG502S2QY">
    <property type="taxonomic scope" value="Eukaryota"/>
</dbReference>
<dbReference type="GeneTree" id="ENSGT00390000015492"/>
<dbReference type="HOGENOM" id="CLU_160791_0_0_1"/>
<dbReference type="InParanoid" id="Q61839"/>
<dbReference type="OMA" id="HDYPNAR"/>
<dbReference type="OrthoDB" id="8911465at2759"/>
<dbReference type="PhylomeDB" id="Q61839"/>
<dbReference type="TreeFam" id="TF106305"/>
<dbReference type="Reactome" id="R-MMU-5578768">
    <property type="pathway name" value="Physiological factors"/>
</dbReference>
<dbReference type="BioGRID-ORCS" id="18159">
    <property type="hits" value="2 hits in 77 CRISPR screens"/>
</dbReference>
<dbReference type="PRO" id="PR:Q61839"/>
<dbReference type="Proteomes" id="UP000000589">
    <property type="component" value="Chromosome 1"/>
</dbReference>
<dbReference type="RNAct" id="Q61839">
    <property type="molecule type" value="protein"/>
</dbReference>
<dbReference type="Bgee" id="ENSMUSG00000026241">
    <property type="expression patterns" value="Expressed in lumbar subsegment of spinal cord and 59 other cell types or tissues"/>
</dbReference>
<dbReference type="ExpressionAtlas" id="Q61839">
    <property type="expression patterns" value="baseline and differential"/>
</dbReference>
<dbReference type="GO" id="GO:0005576">
    <property type="term" value="C:extracellular region"/>
    <property type="evidence" value="ECO:0000304"/>
    <property type="project" value="MGI"/>
</dbReference>
<dbReference type="GO" id="GO:0005615">
    <property type="term" value="C:extracellular space"/>
    <property type="evidence" value="ECO:0007669"/>
    <property type="project" value="Ensembl"/>
</dbReference>
<dbReference type="GO" id="GO:0032991">
    <property type="term" value="C:protein-containing complex"/>
    <property type="evidence" value="ECO:0007669"/>
    <property type="project" value="Ensembl"/>
</dbReference>
<dbReference type="GO" id="GO:0030141">
    <property type="term" value="C:secretory granule"/>
    <property type="evidence" value="ECO:0007669"/>
    <property type="project" value="Ensembl"/>
</dbReference>
<dbReference type="GO" id="GO:0051427">
    <property type="term" value="F:hormone receptor binding"/>
    <property type="evidence" value="ECO:0007669"/>
    <property type="project" value="Ensembl"/>
</dbReference>
<dbReference type="GO" id="GO:0005184">
    <property type="term" value="F:neuropeptide hormone activity"/>
    <property type="evidence" value="ECO:0000304"/>
    <property type="project" value="MGI"/>
</dbReference>
<dbReference type="GO" id="GO:0005102">
    <property type="term" value="F:signaling receptor binding"/>
    <property type="evidence" value="ECO:0000314"/>
    <property type="project" value="MGI"/>
</dbReference>
<dbReference type="GO" id="GO:0001525">
    <property type="term" value="P:angiogenesis"/>
    <property type="evidence" value="ECO:0000315"/>
    <property type="project" value="MGI"/>
</dbReference>
<dbReference type="GO" id="GO:0048513">
    <property type="term" value="P:animal organ development"/>
    <property type="evidence" value="ECO:0000315"/>
    <property type="project" value="MGI"/>
</dbReference>
<dbReference type="GO" id="GO:0097746">
    <property type="term" value="P:blood vessel diameter maintenance"/>
    <property type="evidence" value="ECO:0007669"/>
    <property type="project" value="UniProtKB-KW"/>
</dbReference>
<dbReference type="GO" id="GO:0001974">
    <property type="term" value="P:blood vessel remodeling"/>
    <property type="evidence" value="ECO:0000315"/>
    <property type="project" value="MGI"/>
</dbReference>
<dbReference type="GO" id="GO:0061939">
    <property type="term" value="P:c-di-GMP signaling"/>
    <property type="evidence" value="ECO:0000314"/>
    <property type="project" value="MGI"/>
</dbReference>
<dbReference type="GO" id="GO:1904588">
    <property type="term" value="P:cellular response to glycoprotein"/>
    <property type="evidence" value="ECO:0000314"/>
    <property type="project" value="MGI"/>
</dbReference>
<dbReference type="GO" id="GO:0006182">
    <property type="term" value="P:cGMP biosynthetic process"/>
    <property type="evidence" value="ECO:0000315"/>
    <property type="project" value="GO_Central"/>
</dbReference>
<dbReference type="GO" id="GO:0019934">
    <property type="term" value="P:cGMP-mediated signaling"/>
    <property type="evidence" value="ECO:0007669"/>
    <property type="project" value="Ensembl"/>
</dbReference>
<dbReference type="GO" id="GO:0051276">
    <property type="term" value="P:chromosome organization"/>
    <property type="evidence" value="ECO:0000315"/>
    <property type="project" value="MGI"/>
</dbReference>
<dbReference type="GO" id="GO:0001549">
    <property type="term" value="P:cumulus cell differentiation"/>
    <property type="evidence" value="ECO:0000315"/>
    <property type="project" value="MGI"/>
</dbReference>
<dbReference type="GO" id="GO:0035483">
    <property type="term" value="P:gastric emptying"/>
    <property type="evidence" value="ECO:0000314"/>
    <property type="project" value="MGI"/>
</dbReference>
<dbReference type="GO" id="GO:0003418">
    <property type="term" value="P:growth plate cartilage chondrocyte differentiation"/>
    <property type="evidence" value="ECO:0000315"/>
    <property type="project" value="UniProtKB"/>
</dbReference>
<dbReference type="GO" id="GO:0003419">
    <property type="term" value="P:growth plate cartilage chondrocyte proliferation"/>
    <property type="evidence" value="ECO:0000315"/>
    <property type="project" value="UniProtKB"/>
</dbReference>
<dbReference type="GO" id="GO:0006874">
    <property type="term" value="P:intracellular calcium ion homeostasis"/>
    <property type="evidence" value="ECO:0000314"/>
    <property type="project" value="MGI"/>
</dbReference>
<dbReference type="GO" id="GO:0051321">
    <property type="term" value="P:meiotic cell cycle"/>
    <property type="evidence" value="ECO:0000315"/>
    <property type="project" value="MGI"/>
</dbReference>
<dbReference type="GO" id="GO:1903537">
    <property type="term" value="P:meiotic cell cycle process involved in oocyte maturation"/>
    <property type="evidence" value="ECO:0000315"/>
    <property type="project" value="MGI"/>
</dbReference>
<dbReference type="GO" id="GO:0071965">
    <property type="term" value="P:multicellular organismal locomotion"/>
    <property type="evidence" value="ECO:0000315"/>
    <property type="project" value="MGI"/>
</dbReference>
<dbReference type="GO" id="GO:0008285">
    <property type="term" value="P:negative regulation of cell population proliferation"/>
    <property type="evidence" value="ECO:0007669"/>
    <property type="project" value="Ensembl"/>
</dbReference>
<dbReference type="GO" id="GO:0032966">
    <property type="term" value="P:negative regulation of collagen biosynthetic process"/>
    <property type="evidence" value="ECO:0007669"/>
    <property type="project" value="Ensembl"/>
</dbReference>
<dbReference type="GO" id="GO:2000279">
    <property type="term" value="P:negative regulation of DNA biosynthetic process"/>
    <property type="evidence" value="ECO:0007669"/>
    <property type="project" value="Ensembl"/>
</dbReference>
<dbReference type="GO" id="GO:0051447">
    <property type="term" value="P:negative regulation of meiotic cell cycle"/>
    <property type="evidence" value="ECO:0000315"/>
    <property type="project" value="MGI"/>
</dbReference>
<dbReference type="GO" id="GO:0043524">
    <property type="term" value="P:negative regulation of neuron apoptotic process"/>
    <property type="evidence" value="ECO:0000315"/>
    <property type="project" value="MGI"/>
</dbReference>
<dbReference type="GO" id="GO:1900194">
    <property type="term" value="P:negative regulation of oocyte maturation"/>
    <property type="evidence" value="ECO:0000315"/>
    <property type="project" value="MGI"/>
</dbReference>
<dbReference type="GO" id="GO:0048599">
    <property type="term" value="P:oocyte development"/>
    <property type="evidence" value="ECO:0000315"/>
    <property type="project" value="MGI"/>
</dbReference>
<dbReference type="GO" id="GO:0001503">
    <property type="term" value="P:ossification"/>
    <property type="evidence" value="ECO:0007669"/>
    <property type="project" value="UniProtKB-KW"/>
</dbReference>
<dbReference type="GO" id="GO:0001541">
    <property type="term" value="P:ovarian follicle development"/>
    <property type="evidence" value="ECO:0000315"/>
    <property type="project" value="MGI"/>
</dbReference>
<dbReference type="GO" id="GO:0010753">
    <property type="term" value="P:positive regulation of cGMP-mediated signaling"/>
    <property type="evidence" value="ECO:0007669"/>
    <property type="project" value="Ensembl"/>
</dbReference>
<dbReference type="GO" id="GO:0045669">
    <property type="term" value="P:positive regulation of osteoblast differentiation"/>
    <property type="evidence" value="ECO:0007669"/>
    <property type="project" value="Ensembl"/>
</dbReference>
<dbReference type="GO" id="GO:0009791">
    <property type="term" value="P:post-embryonic development"/>
    <property type="evidence" value="ECO:0000315"/>
    <property type="project" value="MGI"/>
</dbReference>
<dbReference type="GO" id="GO:0006457">
    <property type="term" value="P:protein folding"/>
    <property type="evidence" value="ECO:0007669"/>
    <property type="project" value="Ensembl"/>
</dbReference>
<dbReference type="GO" id="GO:0007168">
    <property type="term" value="P:receptor guanylyl cyclase signaling pathway"/>
    <property type="evidence" value="ECO:0000250"/>
    <property type="project" value="UniProtKB"/>
</dbReference>
<dbReference type="GO" id="GO:0040014">
    <property type="term" value="P:regulation of multicellular organism growth"/>
    <property type="evidence" value="ECO:0000315"/>
    <property type="project" value="MGI"/>
</dbReference>
<dbReference type="GO" id="GO:0048660">
    <property type="term" value="P:regulation of smooth muscle cell proliferation"/>
    <property type="evidence" value="ECO:0007669"/>
    <property type="project" value="Ensembl"/>
</dbReference>
<dbReference type="GO" id="GO:0048678">
    <property type="term" value="P:response to axon injury"/>
    <property type="evidence" value="ECO:0000315"/>
    <property type="project" value="MGI"/>
</dbReference>
<dbReference type="GO" id="GO:0036293">
    <property type="term" value="P:response to decreased oxygen levels"/>
    <property type="evidence" value="ECO:0000315"/>
    <property type="project" value="MGI"/>
</dbReference>
<dbReference type="GO" id="GO:0045471">
    <property type="term" value="P:response to ethanol"/>
    <property type="evidence" value="ECO:0007669"/>
    <property type="project" value="Ensembl"/>
</dbReference>
<dbReference type="GO" id="GO:0001666">
    <property type="term" value="P:response to hypoxia"/>
    <property type="evidence" value="ECO:0007669"/>
    <property type="project" value="Ensembl"/>
</dbReference>
<dbReference type="GO" id="GO:0002931">
    <property type="term" value="P:response to ischemia"/>
    <property type="evidence" value="ECO:0000315"/>
    <property type="project" value="MGI"/>
</dbReference>
<dbReference type="GO" id="GO:0090649">
    <property type="term" value="P:response to oxygen-glucose deprivation"/>
    <property type="evidence" value="ECO:0000315"/>
    <property type="project" value="MGI"/>
</dbReference>
<dbReference type="GO" id="GO:0009611">
    <property type="term" value="P:response to wounding"/>
    <property type="evidence" value="ECO:0000315"/>
    <property type="project" value="MGI"/>
</dbReference>
<dbReference type="GO" id="GO:0009410">
    <property type="term" value="P:response to xenobiotic stimulus"/>
    <property type="evidence" value="ECO:0007669"/>
    <property type="project" value="Ensembl"/>
</dbReference>
<dbReference type="InterPro" id="IPR002406">
    <property type="entry name" value="C_natriurtcpep"/>
</dbReference>
<dbReference type="InterPro" id="IPR000663">
    <property type="entry name" value="Natr_peptide"/>
</dbReference>
<dbReference type="InterPro" id="IPR030480">
    <property type="entry name" value="Natr_peptide_CS"/>
</dbReference>
<dbReference type="PANTHER" id="PTHR12167">
    <property type="entry name" value="C-TYPE NATRIURETIC PEPTIDE"/>
    <property type="match status" value="1"/>
</dbReference>
<dbReference type="PANTHER" id="PTHR12167:SF2">
    <property type="entry name" value="C-TYPE NATRIURETIC PEPTIDE"/>
    <property type="match status" value="1"/>
</dbReference>
<dbReference type="Pfam" id="PF00212">
    <property type="entry name" value="ANP"/>
    <property type="match status" value="1"/>
</dbReference>
<dbReference type="PRINTS" id="PR00713">
    <property type="entry name" value="CNATPEPTIDE"/>
</dbReference>
<dbReference type="PRINTS" id="PR00710">
    <property type="entry name" value="NATPEPTIDES"/>
</dbReference>
<dbReference type="SMART" id="SM00183">
    <property type="entry name" value="NAT_PEP"/>
    <property type="match status" value="1"/>
</dbReference>
<dbReference type="PROSITE" id="PS00263">
    <property type="entry name" value="NATRIURETIC_PEPTIDE"/>
    <property type="match status" value="1"/>
</dbReference>
<name>ANFC_MOUSE</name>
<sequence>MHLSQLIACALLLALLSLRPSEAKPGTPPKVPRTPPGEELADSQAAGGNQKKGDKTPGSGGANLKGDRSRLLRDLRVDTKSRAAWARLLHEHPNARKYKGGNKKGLSKGCFGLKLDRIGSMSGLGC</sequence>
<evidence type="ECO:0000250" key="1"/>
<evidence type="ECO:0000250" key="2">
    <source>
        <dbReference type="UniProtKB" id="P23582"/>
    </source>
</evidence>
<evidence type="ECO:0000255" key="3"/>
<evidence type="ECO:0000256" key="4">
    <source>
        <dbReference type="SAM" id="MobiDB-lite"/>
    </source>
</evidence>
<evidence type="ECO:0000269" key="5">
    <source>
    </source>
</evidence>
<evidence type="ECO:0000269" key="6">
    <source>
    </source>
</evidence>
<evidence type="ECO:0000305" key="7"/>
<proteinExistence type="inferred from homology"/>
<accession>Q61839</accession>
<reference key="1">
    <citation type="journal article" date="1994" name="Genomics">
        <title>Molecular cloning and chromosomal assignment of the mouse C-type natriuretic peptide (CNP) gene (Nppc): comparison with the human CNP gene (NPPC).</title>
        <authorList>
            <person name="Ogawa Y."/>
            <person name="Itoh H."/>
            <person name="Yoshitake Y."/>
            <person name="Inoue M."/>
            <person name="Yoshimasa T."/>
            <person name="Serikawa T."/>
            <person name="Nakao K."/>
        </authorList>
    </citation>
    <scope>NUCLEOTIDE SEQUENCE [GENOMIC DNA]</scope>
    <source>
        <strain>BALB/cJ</strain>
    </source>
</reference>
<reference key="2">
    <citation type="journal article" date="1996" name="Am. J. Physiol.">
        <title>Isolation, mapping, and regulated expression of the gene encoding mouse C-type natriuretic peptide.</title>
        <authorList>
            <person name="Huang H."/>
            <person name="Acuff C.G."/>
            <person name="Steinhelper M.E."/>
        </authorList>
    </citation>
    <scope>NUCLEOTIDE SEQUENCE [GENOMIC DNA]</scope>
    <source>
        <strain>129/Sv</strain>
    </source>
</reference>
<reference key="3">
    <citation type="journal article" date="2001" name="Proc. Natl. Acad. Sci. U.S.A.">
        <title>Dwarfism and early death in mice lacking C-type natriuretic peptide.</title>
        <authorList>
            <person name="Chusho H."/>
            <person name="Tamura N."/>
            <person name="Ogawa Y."/>
            <person name="Yasoda A."/>
            <person name="Suda M."/>
            <person name="Miyazawa T."/>
            <person name="Nakamura K."/>
            <person name="Nakao K."/>
            <person name="Kurihara T."/>
            <person name="Komatsu Y."/>
            <person name="Itoh H."/>
            <person name="Tanaka K."/>
            <person name="Saito Y."/>
            <person name="Katsuki M."/>
            <person name="Nakao K."/>
        </authorList>
    </citation>
    <scope>FUNCTION</scope>
    <scope>DISRUPTION PHENOTYPE</scope>
</reference>
<reference key="4">
    <citation type="journal article" date="2003" name="Br. J. Pharmacol.">
        <title>Vascular natriuretic peptide receptor-linked particulate guanylate cyclases are modulated by nitric oxide-cyclic GMP signalling.</title>
        <authorList>
            <person name="Madhani M."/>
            <person name="Scotland R.S."/>
            <person name="MacAllister R.J."/>
            <person name="Hobbs A.J."/>
        </authorList>
    </citation>
    <scope>FUNCTION</scope>
</reference>
<organism>
    <name type="scientific">Mus musculus</name>
    <name type="common">Mouse</name>
    <dbReference type="NCBI Taxonomy" id="10090"/>
    <lineage>
        <taxon>Eukaryota</taxon>
        <taxon>Metazoa</taxon>
        <taxon>Chordata</taxon>
        <taxon>Craniata</taxon>
        <taxon>Vertebrata</taxon>
        <taxon>Euteleostomi</taxon>
        <taxon>Mammalia</taxon>
        <taxon>Eutheria</taxon>
        <taxon>Euarchontoglires</taxon>
        <taxon>Glires</taxon>
        <taxon>Rodentia</taxon>
        <taxon>Myomorpha</taxon>
        <taxon>Muroidea</taxon>
        <taxon>Muridae</taxon>
        <taxon>Murinae</taxon>
        <taxon>Mus</taxon>
        <taxon>Mus</taxon>
    </lineage>
</organism>